<dbReference type="EMBL" id="CP000438">
    <property type="protein sequence ID" value="ABJ12208.1"/>
    <property type="molecule type" value="Genomic_DNA"/>
</dbReference>
<dbReference type="RefSeq" id="WP_003091143.1">
    <property type="nucleotide sequence ID" value="NZ_CP034244.1"/>
</dbReference>
<dbReference type="SMR" id="Q02PD3"/>
<dbReference type="GeneID" id="77220539"/>
<dbReference type="KEGG" id="pau:PA14_25630"/>
<dbReference type="PseudoCAP" id="PA14_25630"/>
<dbReference type="HOGENOM" id="CLU_129084_2_1_6"/>
<dbReference type="BioCyc" id="PAER208963:G1G74-2139-MONOMER"/>
<dbReference type="Proteomes" id="UP000000653">
    <property type="component" value="Chromosome"/>
</dbReference>
<dbReference type="GO" id="GO:0015934">
    <property type="term" value="C:large ribosomal subunit"/>
    <property type="evidence" value="ECO:0007669"/>
    <property type="project" value="InterPro"/>
</dbReference>
<dbReference type="GO" id="GO:0003735">
    <property type="term" value="F:structural constituent of ribosome"/>
    <property type="evidence" value="ECO:0007669"/>
    <property type="project" value="InterPro"/>
</dbReference>
<dbReference type="GO" id="GO:0006412">
    <property type="term" value="P:translation"/>
    <property type="evidence" value="ECO:0007669"/>
    <property type="project" value="UniProtKB-UniRule"/>
</dbReference>
<dbReference type="HAMAP" id="MF_00340">
    <property type="entry name" value="Ribosomal_bL32"/>
    <property type="match status" value="1"/>
</dbReference>
<dbReference type="InterPro" id="IPR002677">
    <property type="entry name" value="Ribosomal_bL32"/>
</dbReference>
<dbReference type="InterPro" id="IPR044957">
    <property type="entry name" value="Ribosomal_bL32_bact"/>
</dbReference>
<dbReference type="InterPro" id="IPR011332">
    <property type="entry name" value="Ribosomal_zn-bd"/>
</dbReference>
<dbReference type="NCBIfam" id="TIGR01031">
    <property type="entry name" value="rpmF_bact"/>
    <property type="match status" value="1"/>
</dbReference>
<dbReference type="PANTHER" id="PTHR35534">
    <property type="entry name" value="50S RIBOSOMAL PROTEIN L32"/>
    <property type="match status" value="1"/>
</dbReference>
<dbReference type="PANTHER" id="PTHR35534:SF1">
    <property type="entry name" value="LARGE RIBOSOMAL SUBUNIT PROTEIN BL32"/>
    <property type="match status" value="1"/>
</dbReference>
<dbReference type="Pfam" id="PF01783">
    <property type="entry name" value="Ribosomal_L32p"/>
    <property type="match status" value="1"/>
</dbReference>
<dbReference type="SUPFAM" id="SSF57829">
    <property type="entry name" value="Zn-binding ribosomal proteins"/>
    <property type="match status" value="1"/>
</dbReference>
<keyword id="KW-0687">Ribonucleoprotein</keyword>
<keyword id="KW-0689">Ribosomal protein</keyword>
<name>RL32_PSEAB</name>
<protein>
    <recommendedName>
        <fullName evidence="1">Large ribosomal subunit protein bL32</fullName>
    </recommendedName>
    <alternativeName>
        <fullName evidence="3">50S ribosomal protein L32</fullName>
    </alternativeName>
</protein>
<comment type="similarity">
    <text evidence="1">Belongs to the bacterial ribosomal protein bL32 family.</text>
</comment>
<sequence length="60" mass="6792">MAVQQNKKSRSARDMRRSHDALESNALSVEKSTGEVHLRHHVSPDGFYRGRKVVDKGSDE</sequence>
<feature type="chain" id="PRO_0000296534" description="Large ribosomal subunit protein bL32">
    <location>
        <begin position="1"/>
        <end position="60"/>
    </location>
</feature>
<feature type="region of interest" description="Disordered" evidence="2">
    <location>
        <begin position="1"/>
        <end position="60"/>
    </location>
</feature>
<feature type="compositionally biased region" description="Basic and acidic residues" evidence="2">
    <location>
        <begin position="11"/>
        <end position="22"/>
    </location>
</feature>
<accession>Q02PD3</accession>
<reference key="1">
    <citation type="journal article" date="2006" name="Genome Biol.">
        <title>Genomic analysis reveals that Pseudomonas aeruginosa virulence is combinatorial.</title>
        <authorList>
            <person name="Lee D.G."/>
            <person name="Urbach J.M."/>
            <person name="Wu G."/>
            <person name="Liberati N.T."/>
            <person name="Feinbaum R.L."/>
            <person name="Miyata S."/>
            <person name="Diggins L.T."/>
            <person name="He J."/>
            <person name="Saucier M."/>
            <person name="Deziel E."/>
            <person name="Friedman L."/>
            <person name="Li L."/>
            <person name="Grills G."/>
            <person name="Montgomery K."/>
            <person name="Kucherlapati R."/>
            <person name="Rahme L.G."/>
            <person name="Ausubel F.M."/>
        </authorList>
    </citation>
    <scope>NUCLEOTIDE SEQUENCE [LARGE SCALE GENOMIC DNA]</scope>
    <source>
        <strain>UCBPP-PA14</strain>
    </source>
</reference>
<gene>
    <name evidence="1" type="primary">rpmF</name>
    <name type="ordered locus">PA14_25630</name>
</gene>
<proteinExistence type="inferred from homology"/>
<organism>
    <name type="scientific">Pseudomonas aeruginosa (strain UCBPP-PA14)</name>
    <dbReference type="NCBI Taxonomy" id="208963"/>
    <lineage>
        <taxon>Bacteria</taxon>
        <taxon>Pseudomonadati</taxon>
        <taxon>Pseudomonadota</taxon>
        <taxon>Gammaproteobacteria</taxon>
        <taxon>Pseudomonadales</taxon>
        <taxon>Pseudomonadaceae</taxon>
        <taxon>Pseudomonas</taxon>
    </lineage>
</organism>
<evidence type="ECO:0000255" key="1">
    <source>
        <dbReference type="HAMAP-Rule" id="MF_00340"/>
    </source>
</evidence>
<evidence type="ECO:0000256" key="2">
    <source>
        <dbReference type="SAM" id="MobiDB-lite"/>
    </source>
</evidence>
<evidence type="ECO:0000305" key="3"/>